<sequence>MLRTHSLGELNASLIGQTVTVTGWVARRRDHGGVAFVDLRDASGFAQVVVRDEADFDPLRNEWVLQVTGTVERRPEGNENPNLPSGEIELIAETVTVLNTAAALPFQVDEHVEVGEEARLRHRYLDLRRPQPSRIMRLRSEVNRTARELLHGEGFVEVETPTLTRSTPEGARDFLVPARLAPGSWYALPQSPQLFKQLLQVGGIEKYYQIARCYRDEDFRADRQPEFTQLDIEASFVEQDDVIALGEKIVKALWALVGVDVPTPIRRMTYAEAMEKYGSDKPDLRFGLELTDLTEYFKDTPFRVFQNEYVGAVVMPGGASQARRTLDAWQEWAKQRGAKGLAYVLIQEDGELTGPVSKNISEEEKAGLAAAVGANPGDCVFFAAGKPKESRALLGAARVEIGRRCGLFTDAGDGVAAKDADWAFVWVVDAPMFEPAADAVASGDVAVGAGAWTAVHHAFTSPKPEFADTFDADPGSALAYAYDIVCNGNEIGGGSIRIHRRDVQERVFEVMGLSPEEANEKFGFLLEGFKYGAPPHGGIAFGWDRVVALLAGTDSIREVIAFPKTGGGFDPLTGAPAPITAQQRKEAGVDAQPEPKQAEAEPEA</sequence>
<feature type="chain" id="PRO_1000202163" description="Aspartate--tRNA(Asp/Asn) ligase">
    <location>
        <begin position="1"/>
        <end position="604"/>
    </location>
</feature>
<feature type="region of interest" description="Aspartate" evidence="1">
    <location>
        <begin position="193"/>
        <end position="196"/>
    </location>
</feature>
<feature type="region of interest" description="Disordered" evidence="2">
    <location>
        <begin position="571"/>
        <end position="604"/>
    </location>
</feature>
<feature type="binding site" evidence="1">
    <location>
        <position position="169"/>
    </location>
    <ligand>
        <name>L-aspartate</name>
        <dbReference type="ChEBI" id="CHEBI:29991"/>
    </ligand>
</feature>
<feature type="binding site" evidence="1">
    <location>
        <begin position="215"/>
        <end position="217"/>
    </location>
    <ligand>
        <name>ATP</name>
        <dbReference type="ChEBI" id="CHEBI:30616"/>
    </ligand>
</feature>
<feature type="binding site" evidence="1">
    <location>
        <position position="215"/>
    </location>
    <ligand>
        <name>L-aspartate</name>
        <dbReference type="ChEBI" id="CHEBI:29991"/>
    </ligand>
</feature>
<feature type="binding site" evidence="1">
    <location>
        <position position="224"/>
    </location>
    <ligand>
        <name>ATP</name>
        <dbReference type="ChEBI" id="CHEBI:30616"/>
    </ligand>
</feature>
<feature type="binding site" evidence="1">
    <location>
        <position position="456"/>
    </location>
    <ligand>
        <name>L-aspartate</name>
        <dbReference type="ChEBI" id="CHEBI:29991"/>
    </ligand>
</feature>
<feature type="binding site" evidence="1">
    <location>
        <position position="490"/>
    </location>
    <ligand>
        <name>ATP</name>
        <dbReference type="ChEBI" id="CHEBI:30616"/>
    </ligand>
</feature>
<feature type="binding site" evidence="1">
    <location>
        <position position="497"/>
    </location>
    <ligand>
        <name>L-aspartate</name>
        <dbReference type="ChEBI" id="CHEBI:29991"/>
    </ligand>
</feature>
<feature type="binding site" evidence="1">
    <location>
        <begin position="542"/>
        <end position="545"/>
    </location>
    <ligand>
        <name>ATP</name>
        <dbReference type="ChEBI" id="CHEBI:30616"/>
    </ligand>
</feature>
<feature type="site" description="Important for tRNA non-discrimination" evidence="1">
    <location>
        <position position="31"/>
    </location>
</feature>
<feature type="site" description="Important for tRNA non-discrimination" evidence="1">
    <location>
        <position position="77"/>
    </location>
</feature>
<protein>
    <recommendedName>
        <fullName evidence="1">Aspartate--tRNA(Asp/Asn) ligase</fullName>
        <ecNumber evidence="1">6.1.1.23</ecNumber>
    </recommendedName>
    <alternativeName>
        <fullName evidence="1">Aspartyl-tRNA synthetase</fullName>
        <shortName evidence="1">AspRS</shortName>
    </alternativeName>
    <alternativeName>
        <fullName evidence="1">Non-discriminating aspartyl-tRNA synthetase</fullName>
        <shortName evidence="1">ND-AspRS</shortName>
    </alternativeName>
</protein>
<gene>
    <name evidence="1" type="primary">aspS</name>
    <name type="ordered locus">Mlut_12790</name>
</gene>
<organism>
    <name type="scientific">Micrococcus luteus (strain ATCC 4698 / DSM 20030 / JCM 1464 / CCM 169 / CCUG 5858 / IAM 1056 / NBRC 3333 / NCIMB 9278 / NCTC 2665 / VKM Ac-2230)</name>
    <name type="common">Micrococcus lysodeikticus</name>
    <dbReference type="NCBI Taxonomy" id="465515"/>
    <lineage>
        <taxon>Bacteria</taxon>
        <taxon>Bacillati</taxon>
        <taxon>Actinomycetota</taxon>
        <taxon>Actinomycetes</taxon>
        <taxon>Micrococcales</taxon>
        <taxon>Micrococcaceae</taxon>
        <taxon>Micrococcus</taxon>
    </lineage>
</organism>
<dbReference type="EC" id="6.1.1.23" evidence="1"/>
<dbReference type="EMBL" id="CP001628">
    <property type="protein sequence ID" value="ACS30784.1"/>
    <property type="molecule type" value="Genomic_DNA"/>
</dbReference>
<dbReference type="RefSeq" id="WP_010078581.1">
    <property type="nucleotide sequence ID" value="NC_012803.1"/>
</dbReference>
<dbReference type="SMR" id="C5CCH2"/>
<dbReference type="STRING" id="465515.Mlut_12790"/>
<dbReference type="EnsemblBacteria" id="ACS30784">
    <property type="protein sequence ID" value="ACS30784"/>
    <property type="gene ID" value="Mlut_12790"/>
</dbReference>
<dbReference type="GeneID" id="93345434"/>
<dbReference type="KEGG" id="mlu:Mlut_12790"/>
<dbReference type="PATRIC" id="fig|465515.4.peg.1220"/>
<dbReference type="eggNOG" id="COG0173">
    <property type="taxonomic scope" value="Bacteria"/>
</dbReference>
<dbReference type="HOGENOM" id="CLU_014330_3_2_11"/>
<dbReference type="Proteomes" id="UP000000738">
    <property type="component" value="Chromosome"/>
</dbReference>
<dbReference type="GO" id="GO:0005737">
    <property type="term" value="C:cytoplasm"/>
    <property type="evidence" value="ECO:0007669"/>
    <property type="project" value="UniProtKB-SubCell"/>
</dbReference>
<dbReference type="GO" id="GO:0004815">
    <property type="term" value="F:aspartate-tRNA ligase activity"/>
    <property type="evidence" value="ECO:0007669"/>
    <property type="project" value="UniProtKB-UniRule"/>
</dbReference>
<dbReference type="GO" id="GO:0050560">
    <property type="term" value="F:aspartate-tRNA(Asn) ligase activity"/>
    <property type="evidence" value="ECO:0007669"/>
    <property type="project" value="UniProtKB-EC"/>
</dbReference>
<dbReference type="GO" id="GO:0005524">
    <property type="term" value="F:ATP binding"/>
    <property type="evidence" value="ECO:0007669"/>
    <property type="project" value="UniProtKB-UniRule"/>
</dbReference>
<dbReference type="GO" id="GO:0003676">
    <property type="term" value="F:nucleic acid binding"/>
    <property type="evidence" value="ECO:0007669"/>
    <property type="project" value="InterPro"/>
</dbReference>
<dbReference type="GO" id="GO:0006422">
    <property type="term" value="P:aspartyl-tRNA aminoacylation"/>
    <property type="evidence" value="ECO:0007669"/>
    <property type="project" value="UniProtKB-UniRule"/>
</dbReference>
<dbReference type="CDD" id="cd00777">
    <property type="entry name" value="AspRS_core"/>
    <property type="match status" value="1"/>
</dbReference>
<dbReference type="CDD" id="cd04317">
    <property type="entry name" value="EcAspRS_like_N"/>
    <property type="match status" value="1"/>
</dbReference>
<dbReference type="Gene3D" id="3.30.930.10">
    <property type="entry name" value="Bira Bifunctional Protein, Domain 2"/>
    <property type="match status" value="1"/>
</dbReference>
<dbReference type="Gene3D" id="3.30.1360.30">
    <property type="entry name" value="GAD-like domain"/>
    <property type="match status" value="1"/>
</dbReference>
<dbReference type="Gene3D" id="2.40.50.140">
    <property type="entry name" value="Nucleic acid-binding proteins"/>
    <property type="match status" value="1"/>
</dbReference>
<dbReference type="HAMAP" id="MF_00044">
    <property type="entry name" value="Asp_tRNA_synth_type1"/>
    <property type="match status" value="1"/>
</dbReference>
<dbReference type="InterPro" id="IPR004364">
    <property type="entry name" value="Aa-tRNA-synt_II"/>
</dbReference>
<dbReference type="InterPro" id="IPR006195">
    <property type="entry name" value="aa-tRNA-synth_II"/>
</dbReference>
<dbReference type="InterPro" id="IPR045864">
    <property type="entry name" value="aa-tRNA-synth_II/BPL/LPL"/>
</dbReference>
<dbReference type="InterPro" id="IPR004524">
    <property type="entry name" value="Asp-tRNA-ligase_1"/>
</dbReference>
<dbReference type="InterPro" id="IPR047089">
    <property type="entry name" value="Asp-tRNA-ligase_1_N"/>
</dbReference>
<dbReference type="InterPro" id="IPR002312">
    <property type="entry name" value="Asp/Asn-tRNA-synth_IIb"/>
</dbReference>
<dbReference type="InterPro" id="IPR047090">
    <property type="entry name" value="AspRS_core"/>
</dbReference>
<dbReference type="InterPro" id="IPR004115">
    <property type="entry name" value="GAD-like_sf"/>
</dbReference>
<dbReference type="InterPro" id="IPR029351">
    <property type="entry name" value="GAD_dom"/>
</dbReference>
<dbReference type="InterPro" id="IPR012340">
    <property type="entry name" value="NA-bd_OB-fold"/>
</dbReference>
<dbReference type="InterPro" id="IPR004365">
    <property type="entry name" value="NA-bd_OB_tRNA"/>
</dbReference>
<dbReference type="NCBIfam" id="TIGR00459">
    <property type="entry name" value="aspS_bact"/>
    <property type="match status" value="1"/>
</dbReference>
<dbReference type="NCBIfam" id="NF001750">
    <property type="entry name" value="PRK00476.1"/>
    <property type="match status" value="1"/>
</dbReference>
<dbReference type="PANTHER" id="PTHR22594:SF5">
    <property type="entry name" value="ASPARTATE--TRNA LIGASE, MITOCHONDRIAL"/>
    <property type="match status" value="1"/>
</dbReference>
<dbReference type="PANTHER" id="PTHR22594">
    <property type="entry name" value="ASPARTYL/LYSYL-TRNA SYNTHETASE"/>
    <property type="match status" value="1"/>
</dbReference>
<dbReference type="Pfam" id="PF02938">
    <property type="entry name" value="GAD"/>
    <property type="match status" value="1"/>
</dbReference>
<dbReference type="Pfam" id="PF00152">
    <property type="entry name" value="tRNA-synt_2"/>
    <property type="match status" value="1"/>
</dbReference>
<dbReference type="Pfam" id="PF01336">
    <property type="entry name" value="tRNA_anti-codon"/>
    <property type="match status" value="1"/>
</dbReference>
<dbReference type="PRINTS" id="PR01042">
    <property type="entry name" value="TRNASYNTHASP"/>
</dbReference>
<dbReference type="SUPFAM" id="SSF55681">
    <property type="entry name" value="Class II aaRS and biotin synthetases"/>
    <property type="match status" value="1"/>
</dbReference>
<dbReference type="SUPFAM" id="SSF55261">
    <property type="entry name" value="GAD domain-like"/>
    <property type="match status" value="1"/>
</dbReference>
<dbReference type="SUPFAM" id="SSF50249">
    <property type="entry name" value="Nucleic acid-binding proteins"/>
    <property type="match status" value="1"/>
</dbReference>
<dbReference type="PROSITE" id="PS50862">
    <property type="entry name" value="AA_TRNA_LIGASE_II"/>
    <property type="match status" value="1"/>
</dbReference>
<keyword id="KW-0030">Aminoacyl-tRNA synthetase</keyword>
<keyword id="KW-0067">ATP-binding</keyword>
<keyword id="KW-0963">Cytoplasm</keyword>
<keyword id="KW-0436">Ligase</keyword>
<keyword id="KW-0547">Nucleotide-binding</keyword>
<keyword id="KW-0648">Protein biosynthesis</keyword>
<keyword id="KW-1185">Reference proteome</keyword>
<evidence type="ECO:0000255" key="1">
    <source>
        <dbReference type="HAMAP-Rule" id="MF_00044"/>
    </source>
</evidence>
<evidence type="ECO:0000256" key="2">
    <source>
        <dbReference type="SAM" id="MobiDB-lite"/>
    </source>
</evidence>
<reference key="1">
    <citation type="journal article" date="2010" name="J. Bacteriol.">
        <title>Genome sequence of the Fleming strain of Micrococcus luteus, a simple free-living actinobacterium.</title>
        <authorList>
            <person name="Young M."/>
            <person name="Artsatbanov V."/>
            <person name="Beller H.R."/>
            <person name="Chandra G."/>
            <person name="Chater K.F."/>
            <person name="Dover L.G."/>
            <person name="Goh E.B."/>
            <person name="Kahan T."/>
            <person name="Kaprelyants A.S."/>
            <person name="Kyrpides N."/>
            <person name="Lapidus A."/>
            <person name="Lowry S.R."/>
            <person name="Lykidis A."/>
            <person name="Mahillon J."/>
            <person name="Markowitz V."/>
            <person name="Mavromatis K."/>
            <person name="Mukamolova G.V."/>
            <person name="Oren A."/>
            <person name="Rokem J.S."/>
            <person name="Smith M.C."/>
            <person name="Young D.I."/>
            <person name="Greenblatt C.L."/>
        </authorList>
    </citation>
    <scope>NUCLEOTIDE SEQUENCE [LARGE SCALE GENOMIC DNA]</scope>
    <source>
        <strain>ATCC 4698 / DSM 20030 / JCM 1464 / CCM 169 / CCUG 5858 / IAM 1056 / NBRC 3333 / NCIMB 9278 / NCTC 2665 / VKM Ac-2230</strain>
    </source>
</reference>
<comment type="function">
    <text evidence="1">Aspartyl-tRNA synthetase with relaxed tRNA specificity since it is able to aspartylate not only its cognate tRNA(Asp) but also tRNA(Asn). Reaction proceeds in two steps: L-aspartate is first activated by ATP to form Asp-AMP and then transferred to the acceptor end of tRNA(Asp/Asn).</text>
</comment>
<comment type="catalytic activity">
    <reaction evidence="1">
        <text>tRNA(Asx) + L-aspartate + ATP = L-aspartyl-tRNA(Asx) + AMP + diphosphate</text>
        <dbReference type="Rhea" id="RHEA:18349"/>
        <dbReference type="Rhea" id="RHEA-COMP:9710"/>
        <dbReference type="Rhea" id="RHEA-COMP:9711"/>
        <dbReference type="ChEBI" id="CHEBI:29991"/>
        <dbReference type="ChEBI" id="CHEBI:30616"/>
        <dbReference type="ChEBI" id="CHEBI:33019"/>
        <dbReference type="ChEBI" id="CHEBI:78442"/>
        <dbReference type="ChEBI" id="CHEBI:78516"/>
        <dbReference type="ChEBI" id="CHEBI:456215"/>
        <dbReference type="EC" id="6.1.1.23"/>
    </reaction>
</comment>
<comment type="subunit">
    <text evidence="1">Homodimer.</text>
</comment>
<comment type="subcellular location">
    <subcellularLocation>
        <location evidence="1">Cytoplasm</location>
    </subcellularLocation>
</comment>
<comment type="similarity">
    <text evidence="1">Belongs to the class-II aminoacyl-tRNA synthetase family. Type 1 subfamily.</text>
</comment>
<name>SYDND_MICLC</name>
<accession>C5CCH2</accession>
<proteinExistence type="inferred from homology"/>